<protein>
    <recommendedName>
        <fullName evidence="6">Conotoxin Cal6.11</fullName>
    </recommendedName>
    <alternativeName>
        <fullName evidence="5">Conotoxin Cal6.2</fullName>
    </alternativeName>
    <alternativeName>
        <fullName evidence="4">Conotoxin Cl6.11</fullName>
    </alternativeName>
    <alternativeName>
        <fullName evidence="4">Conotoxin Cl6b</fullName>
    </alternativeName>
</protein>
<comment type="function">
    <text evidence="6">Probable neurotoxin with unknown target. Possibly targets ion channels.</text>
</comment>
<comment type="subcellular location">
    <subcellularLocation>
        <location evidence="3">Secreted</location>
    </subcellularLocation>
</comment>
<comment type="tissue specificity">
    <text evidence="7">Expressed by the venom duct.</text>
</comment>
<comment type="domain">
    <text evidence="1">The presence of a 'disulfide through disulfide knot' structurally defines this protein as a knottin.</text>
</comment>
<comment type="domain">
    <text>The cysteine framework is VI/VII (C-C-CC-C-C).</text>
</comment>
<comment type="similarity">
    <text evidence="6">Belongs to the conotoxin O1 superfamily.</text>
</comment>
<organism>
    <name type="scientific">Californiconus californicus</name>
    <name type="common">California cone</name>
    <name type="synonym">Conus californicus</name>
    <dbReference type="NCBI Taxonomy" id="1736779"/>
    <lineage>
        <taxon>Eukaryota</taxon>
        <taxon>Metazoa</taxon>
        <taxon>Spiralia</taxon>
        <taxon>Lophotrochozoa</taxon>
        <taxon>Mollusca</taxon>
        <taxon>Gastropoda</taxon>
        <taxon>Caenogastropoda</taxon>
        <taxon>Neogastropoda</taxon>
        <taxon>Conoidea</taxon>
        <taxon>Conidae</taxon>
        <taxon>Californiconus</taxon>
    </lineage>
</organism>
<sequence>MKLTCVLIIAVLILTACQFIAADNTEYRKWRRSGTSTGMRLGSRDCGPWCWGQNKCCPDESCRSLHESCT</sequence>
<accession>D2Y492</accession>
<reference key="1">
    <citation type="journal article" date="2010" name="Mol. Phylogenet. Evol.">
        <title>Evolution of Conus peptide toxins: analysis of Conus californicus Reeve, 1844.</title>
        <authorList>
            <person name="Biggs J.S."/>
            <person name="Watkins M."/>
            <person name="Puillandre N."/>
            <person name="Ownby J.P."/>
            <person name="Lopez-Vera E."/>
            <person name="Christensen S."/>
            <person name="Moreno K.J."/>
            <person name="Bernaldez J."/>
            <person name="Licea-Navarro A."/>
            <person name="Corneli P.S."/>
            <person name="Olivera B.M."/>
        </authorList>
    </citation>
    <scope>NUCLEOTIDE SEQUENCE [GENOMIC DNA]</scope>
    <scope>PROTEIN SEQUENCE OF 45-70</scope>
    <scope>HYDROXYLATION AT PRO-48 AND PRO-58</scope>
    <scope>GAMMA-CARBOXYGLUTAMATION AT GLU-60 AND GLU-67</scope>
    <scope>SUBCELLULAR LOCATION</scope>
    <source>
        <tissue>Venom</tissue>
    </source>
</reference>
<reference key="2">
    <citation type="journal article" date="2011" name="Toxicon">
        <title>Diversity of conotoxin types from Conus californicus reflects a diversity of prey types and a novel evolutionary history.</title>
        <authorList>
            <person name="Elliger C.A."/>
            <person name="Richmond T.A."/>
            <person name="Lebaric Z.N."/>
            <person name="Pierce N.T."/>
            <person name="Sweedler J.V."/>
            <person name="Gilly W.F."/>
        </authorList>
    </citation>
    <scope>NUCLEOTIDE SEQUENCE [MRNA]</scope>
    <source>
        <tissue>Venom duct</tissue>
    </source>
</reference>
<name>O16B_CONCL</name>
<proteinExistence type="evidence at protein level"/>
<feature type="signal peptide" evidence="2">
    <location>
        <begin position="1"/>
        <end position="22"/>
    </location>
</feature>
<feature type="propeptide" id="PRO_0000414974" evidence="7">
    <location>
        <begin position="23"/>
        <end position="43"/>
    </location>
</feature>
<feature type="peptide" id="PRO_0000414975" description="Conotoxin Cal6.11" evidence="3">
    <location>
        <begin position="45"/>
        <end position="70"/>
    </location>
</feature>
<feature type="modified residue" description="4-hydroxyproline" evidence="7">
    <location>
        <position position="48"/>
    </location>
</feature>
<feature type="modified residue" description="4-hydroxyproline" evidence="7">
    <location>
        <position position="58"/>
    </location>
</feature>
<feature type="modified residue" description="4-carboxyglutamate" evidence="7">
    <location>
        <position position="60"/>
    </location>
</feature>
<feature type="modified residue" description="4-carboxyglutamate" evidence="7">
    <location>
        <position position="67"/>
    </location>
</feature>
<feature type="disulfide bond" evidence="1">
    <location>
        <begin position="46"/>
        <end position="57"/>
    </location>
</feature>
<feature type="disulfide bond" evidence="1">
    <location>
        <begin position="50"/>
        <end position="62"/>
    </location>
</feature>
<feature type="disulfide bond" evidence="1">
    <location>
        <begin position="56"/>
        <end position="69"/>
    </location>
</feature>
<evidence type="ECO:0000250" key="1"/>
<evidence type="ECO:0000255" key="2"/>
<evidence type="ECO:0000269" key="3">
    <source>
    </source>
</evidence>
<evidence type="ECO:0000303" key="4">
    <source>
    </source>
</evidence>
<evidence type="ECO:0000303" key="5">
    <source>
    </source>
</evidence>
<evidence type="ECO:0000305" key="6"/>
<evidence type="ECO:0000305" key="7">
    <source>
    </source>
</evidence>
<keyword id="KW-0903">Direct protein sequencing</keyword>
<keyword id="KW-1015">Disulfide bond</keyword>
<keyword id="KW-0301">Gamma-carboxyglutamic acid</keyword>
<keyword id="KW-0379">Hydroxylation</keyword>
<keyword id="KW-0872">Ion channel impairing toxin</keyword>
<keyword id="KW-0960">Knottin</keyword>
<keyword id="KW-0528">Neurotoxin</keyword>
<keyword id="KW-0964">Secreted</keyword>
<keyword id="KW-0732">Signal</keyword>
<keyword id="KW-0800">Toxin</keyword>
<dbReference type="EMBL" id="FJ959143">
    <property type="protein sequence ID" value="ADB93113.1"/>
    <property type="molecule type" value="Genomic_DNA"/>
</dbReference>
<dbReference type="EMBL" id="GU306156">
    <property type="protein sequence ID" value="ADB04235.1"/>
    <property type="molecule type" value="mRNA"/>
</dbReference>
<dbReference type="ConoServer" id="3966">
    <property type="toxin name" value="Cal6.11 precursor"/>
</dbReference>
<dbReference type="GO" id="GO:0005576">
    <property type="term" value="C:extracellular region"/>
    <property type="evidence" value="ECO:0007669"/>
    <property type="project" value="UniProtKB-SubCell"/>
</dbReference>
<dbReference type="GO" id="GO:0008200">
    <property type="term" value="F:ion channel inhibitor activity"/>
    <property type="evidence" value="ECO:0007669"/>
    <property type="project" value="InterPro"/>
</dbReference>
<dbReference type="GO" id="GO:0090729">
    <property type="term" value="F:toxin activity"/>
    <property type="evidence" value="ECO:0007669"/>
    <property type="project" value="UniProtKB-KW"/>
</dbReference>
<dbReference type="InterPro" id="IPR004214">
    <property type="entry name" value="Conotoxin"/>
</dbReference>
<dbReference type="Pfam" id="PF02950">
    <property type="entry name" value="Conotoxin"/>
    <property type="match status" value="1"/>
</dbReference>